<name>THII_LATSS</name>
<reference key="1">
    <citation type="journal article" date="2005" name="Nat. Biotechnol.">
        <title>The complete genome sequence of the meat-borne lactic acid bacterium Lactobacillus sakei 23K.</title>
        <authorList>
            <person name="Chaillou S."/>
            <person name="Champomier-Verges M.-C."/>
            <person name="Cornet M."/>
            <person name="Crutz-Le Coq A.-M."/>
            <person name="Dudez A.-M."/>
            <person name="Martin V."/>
            <person name="Beaufils S."/>
            <person name="Darbon-Rongere E."/>
            <person name="Bossy R."/>
            <person name="Loux V."/>
            <person name="Zagorec M."/>
        </authorList>
    </citation>
    <scope>NUCLEOTIDE SEQUENCE [LARGE SCALE GENOMIC DNA]</scope>
    <source>
        <strain>23K</strain>
    </source>
</reference>
<evidence type="ECO:0000255" key="1">
    <source>
        <dbReference type="HAMAP-Rule" id="MF_00021"/>
    </source>
</evidence>
<feature type="chain" id="PRO_1000074242" description="Probable tRNA sulfurtransferase">
    <location>
        <begin position="1"/>
        <end position="405"/>
    </location>
</feature>
<feature type="domain" description="THUMP" evidence="1">
    <location>
        <begin position="60"/>
        <end position="165"/>
    </location>
</feature>
<feature type="binding site" evidence="1">
    <location>
        <begin position="183"/>
        <end position="184"/>
    </location>
    <ligand>
        <name>ATP</name>
        <dbReference type="ChEBI" id="CHEBI:30616"/>
    </ligand>
</feature>
<feature type="binding site" evidence="1">
    <location>
        <begin position="208"/>
        <end position="209"/>
    </location>
    <ligand>
        <name>ATP</name>
        <dbReference type="ChEBI" id="CHEBI:30616"/>
    </ligand>
</feature>
<feature type="binding site" evidence="1">
    <location>
        <position position="265"/>
    </location>
    <ligand>
        <name>ATP</name>
        <dbReference type="ChEBI" id="CHEBI:30616"/>
    </ligand>
</feature>
<feature type="binding site" evidence="1">
    <location>
        <position position="287"/>
    </location>
    <ligand>
        <name>ATP</name>
        <dbReference type="ChEBI" id="CHEBI:30616"/>
    </ligand>
</feature>
<feature type="binding site" evidence="1">
    <location>
        <position position="296"/>
    </location>
    <ligand>
        <name>ATP</name>
        <dbReference type="ChEBI" id="CHEBI:30616"/>
    </ligand>
</feature>
<dbReference type="EC" id="2.8.1.4" evidence="1"/>
<dbReference type="EMBL" id="CR936503">
    <property type="protein sequence ID" value="CAI55148.1"/>
    <property type="molecule type" value="Genomic_DNA"/>
</dbReference>
<dbReference type="RefSeq" id="WP_011374550.1">
    <property type="nucleotide sequence ID" value="NC_007576.1"/>
</dbReference>
<dbReference type="SMR" id="Q38XD3"/>
<dbReference type="STRING" id="314315.LCA_0847"/>
<dbReference type="KEGG" id="lsa:LCA_0847"/>
<dbReference type="eggNOG" id="COG0301">
    <property type="taxonomic scope" value="Bacteria"/>
</dbReference>
<dbReference type="HOGENOM" id="CLU_037952_4_0_9"/>
<dbReference type="OrthoDB" id="9773948at2"/>
<dbReference type="UniPathway" id="UPA00060"/>
<dbReference type="Proteomes" id="UP000002707">
    <property type="component" value="Chromosome"/>
</dbReference>
<dbReference type="GO" id="GO:0005829">
    <property type="term" value="C:cytosol"/>
    <property type="evidence" value="ECO:0007669"/>
    <property type="project" value="TreeGrafter"/>
</dbReference>
<dbReference type="GO" id="GO:0005524">
    <property type="term" value="F:ATP binding"/>
    <property type="evidence" value="ECO:0007669"/>
    <property type="project" value="UniProtKB-UniRule"/>
</dbReference>
<dbReference type="GO" id="GO:0004810">
    <property type="term" value="F:CCA tRNA nucleotidyltransferase activity"/>
    <property type="evidence" value="ECO:0007669"/>
    <property type="project" value="InterPro"/>
</dbReference>
<dbReference type="GO" id="GO:0000049">
    <property type="term" value="F:tRNA binding"/>
    <property type="evidence" value="ECO:0007669"/>
    <property type="project" value="UniProtKB-UniRule"/>
</dbReference>
<dbReference type="GO" id="GO:0140741">
    <property type="term" value="F:tRNA-uracil-4 sulfurtransferase activity"/>
    <property type="evidence" value="ECO:0007669"/>
    <property type="project" value="UniProtKB-EC"/>
</dbReference>
<dbReference type="GO" id="GO:0009228">
    <property type="term" value="P:thiamine biosynthetic process"/>
    <property type="evidence" value="ECO:0007669"/>
    <property type="project" value="UniProtKB-KW"/>
</dbReference>
<dbReference type="GO" id="GO:0009229">
    <property type="term" value="P:thiamine diphosphate biosynthetic process"/>
    <property type="evidence" value="ECO:0007669"/>
    <property type="project" value="UniProtKB-UniRule"/>
</dbReference>
<dbReference type="GO" id="GO:0052837">
    <property type="term" value="P:thiazole biosynthetic process"/>
    <property type="evidence" value="ECO:0007669"/>
    <property type="project" value="TreeGrafter"/>
</dbReference>
<dbReference type="GO" id="GO:0002937">
    <property type="term" value="P:tRNA 4-thiouridine biosynthesis"/>
    <property type="evidence" value="ECO:0007669"/>
    <property type="project" value="TreeGrafter"/>
</dbReference>
<dbReference type="CDD" id="cd01712">
    <property type="entry name" value="PPase_ThiI"/>
    <property type="match status" value="1"/>
</dbReference>
<dbReference type="CDD" id="cd11716">
    <property type="entry name" value="THUMP_ThiI"/>
    <property type="match status" value="1"/>
</dbReference>
<dbReference type="FunFam" id="3.40.50.620:FF:000053">
    <property type="entry name" value="Probable tRNA sulfurtransferase"/>
    <property type="match status" value="1"/>
</dbReference>
<dbReference type="Gene3D" id="3.30.2130.30">
    <property type="match status" value="1"/>
</dbReference>
<dbReference type="Gene3D" id="3.40.50.620">
    <property type="entry name" value="HUPs"/>
    <property type="match status" value="1"/>
</dbReference>
<dbReference type="HAMAP" id="MF_00021">
    <property type="entry name" value="ThiI"/>
    <property type="match status" value="1"/>
</dbReference>
<dbReference type="InterPro" id="IPR014729">
    <property type="entry name" value="Rossmann-like_a/b/a_fold"/>
</dbReference>
<dbReference type="InterPro" id="IPR020536">
    <property type="entry name" value="ThiI_AANH"/>
</dbReference>
<dbReference type="InterPro" id="IPR054173">
    <property type="entry name" value="ThiI_fer"/>
</dbReference>
<dbReference type="InterPro" id="IPR049961">
    <property type="entry name" value="ThiI_N"/>
</dbReference>
<dbReference type="InterPro" id="IPR004114">
    <property type="entry name" value="THUMP_dom"/>
</dbReference>
<dbReference type="InterPro" id="IPR049962">
    <property type="entry name" value="THUMP_ThiI"/>
</dbReference>
<dbReference type="InterPro" id="IPR003720">
    <property type="entry name" value="tRNA_STrfase"/>
</dbReference>
<dbReference type="InterPro" id="IPR050102">
    <property type="entry name" value="tRNA_sulfurtransferase_ThiI"/>
</dbReference>
<dbReference type="NCBIfam" id="TIGR00342">
    <property type="entry name" value="tRNA uracil 4-sulfurtransferase ThiI"/>
    <property type="match status" value="1"/>
</dbReference>
<dbReference type="PANTHER" id="PTHR43209">
    <property type="entry name" value="TRNA SULFURTRANSFERASE"/>
    <property type="match status" value="1"/>
</dbReference>
<dbReference type="PANTHER" id="PTHR43209:SF1">
    <property type="entry name" value="TRNA SULFURTRANSFERASE"/>
    <property type="match status" value="1"/>
</dbReference>
<dbReference type="Pfam" id="PF02568">
    <property type="entry name" value="ThiI"/>
    <property type="match status" value="1"/>
</dbReference>
<dbReference type="Pfam" id="PF22025">
    <property type="entry name" value="ThiI_fer"/>
    <property type="match status" value="1"/>
</dbReference>
<dbReference type="Pfam" id="PF02926">
    <property type="entry name" value="THUMP"/>
    <property type="match status" value="1"/>
</dbReference>
<dbReference type="SMART" id="SM00981">
    <property type="entry name" value="THUMP"/>
    <property type="match status" value="1"/>
</dbReference>
<dbReference type="SUPFAM" id="SSF52402">
    <property type="entry name" value="Adenine nucleotide alpha hydrolases-like"/>
    <property type="match status" value="1"/>
</dbReference>
<dbReference type="SUPFAM" id="SSF143437">
    <property type="entry name" value="THUMP domain-like"/>
    <property type="match status" value="1"/>
</dbReference>
<dbReference type="PROSITE" id="PS51165">
    <property type="entry name" value="THUMP"/>
    <property type="match status" value="1"/>
</dbReference>
<proteinExistence type="inferred from homology"/>
<sequence>MQYTEIMVRYGELSTKGKNRNDFIGRLNGNVTKALHEYKQLRIHPKRDRMHIILNGDDAEGVIERLRHVFGIQNFSPSIEVNRDLDSVKETALAMMKEIGKPGMTFKVNTRRSDHNFFLDTNDMNRELGGYLSDELPELEVQMKKPDITLRVEIRQDAIYLTNQVIQGAGGLPVGSAGKGMLMLSGGIDSPVAGYLTLKRGVDIEMVHFFSPPYTSDNALNKAKELTAKLVPYVGGIKFIEVPFTEIQEEVKHSVPEGYLMTIQRRMMLRLTDQIRAKRQGLAIFNGESVGQVASQTLESMMAINDVTTTPIVRPVATMDKNEIIEIAKDIDTYDLSIMPFEDCCTIFAPPAPKTRPNLDKTRFYEQRIDVDALIERSLVGVKVTEIKAGDQFLNQDEEIIAELL</sequence>
<gene>
    <name evidence="1" type="primary">thiI</name>
    <name type="ordered locus">LCA_0847</name>
</gene>
<organism>
    <name type="scientific">Latilactobacillus sakei subsp. sakei (strain 23K)</name>
    <name type="common">Lactobacillus sakei subsp. sakei</name>
    <dbReference type="NCBI Taxonomy" id="314315"/>
    <lineage>
        <taxon>Bacteria</taxon>
        <taxon>Bacillati</taxon>
        <taxon>Bacillota</taxon>
        <taxon>Bacilli</taxon>
        <taxon>Lactobacillales</taxon>
        <taxon>Lactobacillaceae</taxon>
        <taxon>Latilactobacillus</taxon>
    </lineage>
</organism>
<accession>Q38XD3</accession>
<protein>
    <recommendedName>
        <fullName evidence="1">Probable tRNA sulfurtransferase</fullName>
        <ecNumber evidence="1">2.8.1.4</ecNumber>
    </recommendedName>
    <alternativeName>
        <fullName evidence="1">Sulfur carrier protein ThiS sulfurtransferase</fullName>
    </alternativeName>
    <alternativeName>
        <fullName evidence="1">Thiamine biosynthesis protein ThiI</fullName>
    </alternativeName>
    <alternativeName>
        <fullName evidence="1">tRNA 4-thiouridine synthase</fullName>
    </alternativeName>
</protein>
<keyword id="KW-0067">ATP-binding</keyword>
<keyword id="KW-0963">Cytoplasm</keyword>
<keyword id="KW-0547">Nucleotide-binding</keyword>
<keyword id="KW-1185">Reference proteome</keyword>
<keyword id="KW-0694">RNA-binding</keyword>
<keyword id="KW-0784">Thiamine biosynthesis</keyword>
<keyword id="KW-0808">Transferase</keyword>
<keyword id="KW-0820">tRNA-binding</keyword>
<comment type="function">
    <text evidence="1">Catalyzes the ATP-dependent transfer of a sulfur to tRNA to produce 4-thiouridine in position 8 of tRNAs, which functions as a near-UV photosensor. Also catalyzes the transfer of sulfur to the sulfur carrier protein ThiS, forming ThiS-thiocarboxylate. This is a step in the synthesis of thiazole, in the thiamine biosynthesis pathway. The sulfur is donated as persulfide by IscS.</text>
</comment>
<comment type="catalytic activity">
    <reaction evidence="1">
        <text>[ThiI sulfur-carrier protein]-S-sulfanyl-L-cysteine + a uridine in tRNA + 2 reduced [2Fe-2S]-[ferredoxin] + ATP + H(+) = [ThiI sulfur-carrier protein]-L-cysteine + a 4-thiouridine in tRNA + 2 oxidized [2Fe-2S]-[ferredoxin] + AMP + diphosphate</text>
        <dbReference type="Rhea" id="RHEA:24176"/>
        <dbReference type="Rhea" id="RHEA-COMP:10000"/>
        <dbReference type="Rhea" id="RHEA-COMP:10001"/>
        <dbReference type="Rhea" id="RHEA-COMP:13337"/>
        <dbReference type="Rhea" id="RHEA-COMP:13338"/>
        <dbReference type="Rhea" id="RHEA-COMP:13339"/>
        <dbReference type="Rhea" id="RHEA-COMP:13340"/>
        <dbReference type="ChEBI" id="CHEBI:15378"/>
        <dbReference type="ChEBI" id="CHEBI:29950"/>
        <dbReference type="ChEBI" id="CHEBI:30616"/>
        <dbReference type="ChEBI" id="CHEBI:33019"/>
        <dbReference type="ChEBI" id="CHEBI:33737"/>
        <dbReference type="ChEBI" id="CHEBI:33738"/>
        <dbReference type="ChEBI" id="CHEBI:61963"/>
        <dbReference type="ChEBI" id="CHEBI:65315"/>
        <dbReference type="ChEBI" id="CHEBI:136798"/>
        <dbReference type="ChEBI" id="CHEBI:456215"/>
        <dbReference type="EC" id="2.8.1.4"/>
    </reaction>
</comment>
<comment type="catalytic activity">
    <reaction evidence="1">
        <text>[ThiS sulfur-carrier protein]-C-terminal Gly-Gly-AMP + S-sulfanyl-L-cysteinyl-[cysteine desulfurase] + AH2 = [ThiS sulfur-carrier protein]-C-terminal-Gly-aminoethanethioate + L-cysteinyl-[cysteine desulfurase] + A + AMP + 2 H(+)</text>
        <dbReference type="Rhea" id="RHEA:43340"/>
        <dbReference type="Rhea" id="RHEA-COMP:12157"/>
        <dbReference type="Rhea" id="RHEA-COMP:12158"/>
        <dbReference type="Rhea" id="RHEA-COMP:12910"/>
        <dbReference type="Rhea" id="RHEA-COMP:19908"/>
        <dbReference type="ChEBI" id="CHEBI:13193"/>
        <dbReference type="ChEBI" id="CHEBI:15378"/>
        <dbReference type="ChEBI" id="CHEBI:17499"/>
        <dbReference type="ChEBI" id="CHEBI:29950"/>
        <dbReference type="ChEBI" id="CHEBI:61963"/>
        <dbReference type="ChEBI" id="CHEBI:90618"/>
        <dbReference type="ChEBI" id="CHEBI:232372"/>
        <dbReference type="ChEBI" id="CHEBI:456215"/>
    </reaction>
</comment>
<comment type="pathway">
    <text evidence="1">Cofactor biosynthesis; thiamine diphosphate biosynthesis.</text>
</comment>
<comment type="subcellular location">
    <subcellularLocation>
        <location evidence="1">Cytoplasm</location>
    </subcellularLocation>
</comment>
<comment type="similarity">
    <text evidence="1">Belongs to the ThiI family.</text>
</comment>